<protein>
    <recommendedName>
        <fullName>Phylloplanin</fullName>
    </recommendedName>
    <alternativeName>
        <fullName>T-phylloplanin</fullName>
    </alternativeName>
</protein>
<comment type="function">
    <text>Inhibits spore germination and leaf infection by fungal pathogens.</text>
</comment>
<comment type="subcellular location">
    <subcellularLocation>
        <location evidence="1">Secreted</location>
    </subcellularLocation>
</comment>
<comment type="tissue specificity">
    <text evidence="1">Expressed in small glandular secreting trichomes (SGTs).</text>
</comment>
<comment type="PTM">
    <text>Probably covalently linked to cuticular lipids and/or trichome exudate diterpens or sugar esters in order to increase the solubility in exudate and the dispersion on the leaf surface.</text>
</comment>
<dbReference type="EMBL" id="AY705384">
    <property type="protein sequence ID" value="AAW22988.1"/>
    <property type="molecule type" value="Genomic_DNA"/>
</dbReference>
<dbReference type="RefSeq" id="NP_001412860.1">
    <property type="nucleotide sequence ID" value="NM_001425931.1"/>
</dbReference>
<dbReference type="RefSeq" id="XP_016489229.1">
    <property type="nucleotide sequence ID" value="XM_016633743.1"/>
</dbReference>
<dbReference type="SMR" id="Q56S59"/>
<dbReference type="STRING" id="4097.Q56S59"/>
<dbReference type="PaxDb" id="4097-Q56S59"/>
<dbReference type="GeneID" id="107809147"/>
<dbReference type="KEGG" id="nta:107809147"/>
<dbReference type="OrthoDB" id="905355at2759"/>
<dbReference type="PhylomeDB" id="Q56S59"/>
<dbReference type="Proteomes" id="UP000084051">
    <property type="component" value="Unplaced"/>
</dbReference>
<dbReference type="GO" id="GO:0005576">
    <property type="term" value="C:extracellular region"/>
    <property type="evidence" value="ECO:0007669"/>
    <property type="project" value="UniProtKB-SubCell"/>
</dbReference>
<dbReference type="GO" id="GO:0006952">
    <property type="term" value="P:defense response"/>
    <property type="evidence" value="ECO:0007669"/>
    <property type="project" value="UniProtKB-KW"/>
</dbReference>
<dbReference type="InterPro" id="IPR040404">
    <property type="entry name" value="Phylloplanin-like"/>
</dbReference>
<dbReference type="PANTHER" id="PTHR34458:SF5">
    <property type="entry name" value="POLLEN OLE E 1 ALLERGEN AND EXTENSIN FAMILY PROTEIN"/>
    <property type="match status" value="1"/>
</dbReference>
<dbReference type="PANTHER" id="PTHR34458">
    <property type="entry name" value="POLLEN OLE E 1 ALLERGEN AND EXTENSIN FAMILY PROTEIN-RELATED"/>
    <property type="match status" value="1"/>
</dbReference>
<evidence type="ECO:0000269" key="1">
    <source>
    </source>
</evidence>
<organism>
    <name type="scientific">Nicotiana tabacum</name>
    <name type="common">Common tobacco</name>
    <dbReference type="NCBI Taxonomy" id="4097"/>
    <lineage>
        <taxon>Eukaryota</taxon>
        <taxon>Viridiplantae</taxon>
        <taxon>Streptophyta</taxon>
        <taxon>Embryophyta</taxon>
        <taxon>Tracheophyta</taxon>
        <taxon>Spermatophyta</taxon>
        <taxon>Magnoliopsida</taxon>
        <taxon>eudicotyledons</taxon>
        <taxon>Gunneridae</taxon>
        <taxon>Pentapetalae</taxon>
        <taxon>asterids</taxon>
        <taxon>lamiids</taxon>
        <taxon>Solanales</taxon>
        <taxon>Solanaceae</taxon>
        <taxon>Nicotianoideae</taxon>
        <taxon>Nicotianeae</taxon>
        <taxon>Nicotiana</taxon>
    </lineage>
</organism>
<sequence length="150" mass="15310">MASAKIFLIFLLAALIATPAAFAILVPTLVSTHISGLVFCSVNGNLDVINGLSPQVFPNASVQLRCGATNVISSTITNGSGAFSLAVNTFPLLNCNLVVATPLSTCNATLQSVGRLASSLRLVNITLGSGTGLIRVGLAPTGFILNLNIN</sequence>
<feature type="signal peptide" evidence="1">
    <location>
        <begin position="1"/>
        <end position="23"/>
    </location>
</feature>
<feature type="chain" id="PRO_0000022057" description="Phylloplanin">
    <location>
        <begin position="24"/>
        <end position="150"/>
    </location>
</feature>
<reference key="1">
    <citation type="journal article" date="2005" name="Plant Cell">
        <title>Phylloplanins of tobacco are defensive proteins deployed on aerial surfaces by short glandular trichomes.</title>
        <authorList>
            <person name="Shepherd R.W."/>
            <person name="Bass W.T."/>
            <person name="Houtz R.L."/>
            <person name="Wagner G.J."/>
        </authorList>
    </citation>
    <scope>NUCLEOTIDE SEQUENCE [GENOMIC DNA / MRNA]</scope>
    <scope>PROTEIN SEQUENCE OF 24-42; 60-77; 97-114; 134-142 AND 114-149</scope>
    <scope>TISSUE SPECIFICITY</scope>
    <scope>SUBCELLULAR LOCATION</scope>
</reference>
<name>PHYLL_TOBAC</name>
<accession>Q56S59</accession>
<proteinExistence type="evidence at protein level"/>
<keyword id="KW-0903">Direct protein sequencing</keyword>
<keyword id="KW-0611">Plant defense</keyword>
<keyword id="KW-1185">Reference proteome</keyword>
<keyword id="KW-0964">Secreted</keyword>
<keyword id="KW-0732">Signal</keyword>